<keyword id="KW-0963">Cytoplasm</keyword>
<keyword id="KW-0479">Metal-binding</keyword>
<keyword id="KW-0520">NAD</keyword>
<keyword id="KW-0560">Oxidoreductase</keyword>
<keyword id="KW-1185">Reference proteome</keyword>
<keyword id="KW-0862">Zinc</keyword>
<proteinExistence type="inferred from homology"/>
<protein>
    <recommendedName>
        <fullName evidence="1">L-threonine 3-dehydrogenase</fullName>
        <shortName evidence="1">TDH</shortName>
        <ecNumber evidence="1">1.1.1.103</ecNumber>
    </recommendedName>
</protein>
<organism>
    <name type="scientific">Paraburkholderia xenovorans (strain LB400)</name>
    <dbReference type="NCBI Taxonomy" id="266265"/>
    <lineage>
        <taxon>Bacteria</taxon>
        <taxon>Pseudomonadati</taxon>
        <taxon>Pseudomonadota</taxon>
        <taxon>Betaproteobacteria</taxon>
        <taxon>Burkholderiales</taxon>
        <taxon>Burkholderiaceae</taxon>
        <taxon>Paraburkholderia</taxon>
    </lineage>
</organism>
<name>TDH_PARXL</name>
<evidence type="ECO:0000255" key="1">
    <source>
        <dbReference type="HAMAP-Rule" id="MF_00627"/>
    </source>
</evidence>
<accession>Q13SG2</accession>
<comment type="function">
    <text evidence="1">Catalyzes the NAD(+)-dependent oxidation of L-threonine to 2-amino-3-ketobutyrate.</text>
</comment>
<comment type="catalytic activity">
    <reaction evidence="1">
        <text>L-threonine + NAD(+) = (2S)-2-amino-3-oxobutanoate + NADH + H(+)</text>
        <dbReference type="Rhea" id="RHEA:13161"/>
        <dbReference type="ChEBI" id="CHEBI:15378"/>
        <dbReference type="ChEBI" id="CHEBI:57540"/>
        <dbReference type="ChEBI" id="CHEBI:57926"/>
        <dbReference type="ChEBI" id="CHEBI:57945"/>
        <dbReference type="ChEBI" id="CHEBI:78948"/>
        <dbReference type="EC" id="1.1.1.103"/>
    </reaction>
</comment>
<comment type="cofactor">
    <cofactor evidence="1">
        <name>Zn(2+)</name>
        <dbReference type="ChEBI" id="CHEBI:29105"/>
    </cofactor>
    <text evidence="1">Binds 2 Zn(2+) ions per subunit.</text>
</comment>
<comment type="pathway">
    <text evidence="1">Amino-acid degradation; L-threonine degradation via oxydo-reductase pathway; glycine from L-threonine: step 1/2.</text>
</comment>
<comment type="subunit">
    <text evidence="1">Homotetramer.</text>
</comment>
<comment type="subcellular location">
    <subcellularLocation>
        <location evidence="1">Cytoplasm</location>
    </subcellularLocation>
</comment>
<comment type="similarity">
    <text evidence="1">Belongs to the zinc-containing alcohol dehydrogenase family.</text>
</comment>
<reference key="1">
    <citation type="journal article" date="2006" name="Proc. Natl. Acad. Sci. U.S.A.">
        <title>Burkholderia xenovorans LB400 harbors a multi-replicon, 9.73-Mbp genome shaped for versatility.</title>
        <authorList>
            <person name="Chain P.S.G."/>
            <person name="Denef V.J."/>
            <person name="Konstantinidis K.T."/>
            <person name="Vergez L.M."/>
            <person name="Agullo L."/>
            <person name="Reyes V.L."/>
            <person name="Hauser L."/>
            <person name="Cordova M."/>
            <person name="Gomez L."/>
            <person name="Gonzalez M."/>
            <person name="Land M."/>
            <person name="Lao V."/>
            <person name="Larimer F."/>
            <person name="LiPuma J.J."/>
            <person name="Mahenthiralingam E."/>
            <person name="Malfatti S.A."/>
            <person name="Marx C.J."/>
            <person name="Parnell J.J."/>
            <person name="Ramette A."/>
            <person name="Richardson P."/>
            <person name="Seeger M."/>
            <person name="Smith D."/>
            <person name="Spilker T."/>
            <person name="Sul W.J."/>
            <person name="Tsoi T.V."/>
            <person name="Ulrich L.E."/>
            <person name="Zhulin I.B."/>
            <person name="Tiedje J.M."/>
        </authorList>
    </citation>
    <scope>NUCLEOTIDE SEQUENCE [LARGE SCALE GENOMIC DNA]</scope>
    <source>
        <strain>LB400</strain>
    </source>
</reference>
<feature type="chain" id="PRO_1000051629" description="L-threonine 3-dehydrogenase">
    <location>
        <begin position="1"/>
        <end position="343"/>
    </location>
</feature>
<feature type="active site" description="Charge relay system" evidence="1">
    <location>
        <position position="40"/>
    </location>
</feature>
<feature type="active site" description="Charge relay system" evidence="1">
    <location>
        <position position="43"/>
    </location>
</feature>
<feature type="binding site" evidence="1">
    <location>
        <position position="38"/>
    </location>
    <ligand>
        <name>Zn(2+)</name>
        <dbReference type="ChEBI" id="CHEBI:29105"/>
        <label>1</label>
        <note>catalytic</note>
    </ligand>
</feature>
<feature type="binding site" evidence="1">
    <location>
        <position position="63"/>
    </location>
    <ligand>
        <name>Zn(2+)</name>
        <dbReference type="ChEBI" id="CHEBI:29105"/>
        <label>1</label>
        <note>catalytic</note>
    </ligand>
</feature>
<feature type="binding site" evidence="1">
    <location>
        <position position="64"/>
    </location>
    <ligand>
        <name>Zn(2+)</name>
        <dbReference type="ChEBI" id="CHEBI:29105"/>
        <label>1</label>
        <note>catalytic</note>
    </ligand>
</feature>
<feature type="binding site" evidence="1">
    <location>
        <position position="93"/>
    </location>
    <ligand>
        <name>Zn(2+)</name>
        <dbReference type="ChEBI" id="CHEBI:29105"/>
        <label>2</label>
    </ligand>
</feature>
<feature type="binding site" evidence="1">
    <location>
        <position position="96"/>
    </location>
    <ligand>
        <name>Zn(2+)</name>
        <dbReference type="ChEBI" id="CHEBI:29105"/>
        <label>2</label>
    </ligand>
</feature>
<feature type="binding site" evidence="1">
    <location>
        <position position="99"/>
    </location>
    <ligand>
        <name>Zn(2+)</name>
        <dbReference type="ChEBI" id="CHEBI:29105"/>
        <label>2</label>
    </ligand>
</feature>
<feature type="binding site" evidence="1">
    <location>
        <position position="107"/>
    </location>
    <ligand>
        <name>Zn(2+)</name>
        <dbReference type="ChEBI" id="CHEBI:29105"/>
        <label>2</label>
    </ligand>
</feature>
<feature type="binding site" evidence="1">
    <location>
        <position position="175"/>
    </location>
    <ligand>
        <name>NAD(+)</name>
        <dbReference type="ChEBI" id="CHEBI:57540"/>
    </ligand>
</feature>
<feature type="binding site" evidence="1">
    <location>
        <position position="195"/>
    </location>
    <ligand>
        <name>NAD(+)</name>
        <dbReference type="ChEBI" id="CHEBI:57540"/>
    </ligand>
</feature>
<feature type="binding site" evidence="1">
    <location>
        <position position="200"/>
    </location>
    <ligand>
        <name>NAD(+)</name>
        <dbReference type="ChEBI" id="CHEBI:57540"/>
    </ligand>
</feature>
<feature type="binding site" evidence="1">
    <location>
        <begin position="262"/>
        <end position="264"/>
    </location>
    <ligand>
        <name>NAD(+)</name>
        <dbReference type="ChEBI" id="CHEBI:57540"/>
    </ligand>
</feature>
<feature type="binding site" evidence="1">
    <location>
        <begin position="286"/>
        <end position="287"/>
    </location>
    <ligand>
        <name>NAD(+)</name>
        <dbReference type="ChEBI" id="CHEBI:57540"/>
    </ligand>
</feature>
<feature type="site" description="Important for catalytic activity for the proton relay mechanism but does not participate directly in the coordination of zinc atom" evidence="1">
    <location>
        <position position="148"/>
    </location>
</feature>
<gene>
    <name evidence="1" type="primary">tdh</name>
    <name type="ordered locus">Bxeno_B0009</name>
    <name type="ORF">Bxe_B3020</name>
</gene>
<sequence>MKALAKLERAPGLTLTDVKKPEVGHNDVMIRITRTAICGTDIHIWKWDDWAQKTIPVPMHVGHEYVGEIVEMGQEVRGFAIGDRVSGEGHITCGFCRNCRAGRRHLCRNTVGVGVNREGAFAEYLVIPAFNAFKIPPEISDDLAAIFDPFGNATHTALSFNLVGEDVLITGAGPIGIMAVAIAKHVGARNVVITDVNDYRLELARKMGATRAVNVSRESLRDVMADLHMAEGFDVGLEMSGVPSAFTGMLEAMNHGGKIALLGIPPAQTAIDWTQVIFKGLEIKGIYGREMFETWYKMVAMLQSGLDLSPILTHHFKVDDYREAFATMLSGESGKVILDWTAA</sequence>
<dbReference type="EC" id="1.1.1.103" evidence="1"/>
<dbReference type="EMBL" id="CP000271">
    <property type="protein sequence ID" value="ABE32977.1"/>
    <property type="molecule type" value="Genomic_DNA"/>
</dbReference>
<dbReference type="RefSeq" id="WP_011490366.1">
    <property type="nucleotide sequence ID" value="NC_007952.1"/>
</dbReference>
<dbReference type="SMR" id="Q13SG2"/>
<dbReference type="STRING" id="266265.Bxe_B3020"/>
<dbReference type="KEGG" id="bxb:DR64_5349"/>
<dbReference type="KEGG" id="bxe:Bxe_B3020"/>
<dbReference type="PATRIC" id="fig|266265.5.peg.4669"/>
<dbReference type="eggNOG" id="COG1063">
    <property type="taxonomic scope" value="Bacteria"/>
</dbReference>
<dbReference type="OrthoDB" id="5484143at2"/>
<dbReference type="UniPathway" id="UPA00046">
    <property type="reaction ID" value="UER00505"/>
</dbReference>
<dbReference type="Proteomes" id="UP000001817">
    <property type="component" value="Chromosome 2"/>
</dbReference>
<dbReference type="GO" id="GO:0005737">
    <property type="term" value="C:cytoplasm"/>
    <property type="evidence" value="ECO:0007669"/>
    <property type="project" value="UniProtKB-SubCell"/>
</dbReference>
<dbReference type="GO" id="GO:0008743">
    <property type="term" value="F:L-threonine 3-dehydrogenase activity"/>
    <property type="evidence" value="ECO:0007669"/>
    <property type="project" value="UniProtKB-UniRule"/>
</dbReference>
<dbReference type="GO" id="GO:0008270">
    <property type="term" value="F:zinc ion binding"/>
    <property type="evidence" value="ECO:0007669"/>
    <property type="project" value="UniProtKB-UniRule"/>
</dbReference>
<dbReference type="GO" id="GO:0019518">
    <property type="term" value="P:L-threonine catabolic process to glycine"/>
    <property type="evidence" value="ECO:0007669"/>
    <property type="project" value="UniProtKB-UniPathway"/>
</dbReference>
<dbReference type="Gene3D" id="3.90.180.10">
    <property type="entry name" value="Medium-chain alcohol dehydrogenases, catalytic domain"/>
    <property type="match status" value="1"/>
</dbReference>
<dbReference type="Gene3D" id="3.40.50.720">
    <property type="entry name" value="NAD(P)-binding Rossmann-like Domain"/>
    <property type="match status" value="1"/>
</dbReference>
<dbReference type="HAMAP" id="MF_00627">
    <property type="entry name" value="Thr_dehydrog"/>
    <property type="match status" value="1"/>
</dbReference>
<dbReference type="InterPro" id="IPR013149">
    <property type="entry name" value="ADH-like_C"/>
</dbReference>
<dbReference type="InterPro" id="IPR013154">
    <property type="entry name" value="ADH-like_N"/>
</dbReference>
<dbReference type="InterPro" id="IPR002328">
    <property type="entry name" value="ADH_Zn_CS"/>
</dbReference>
<dbReference type="InterPro" id="IPR011032">
    <property type="entry name" value="GroES-like_sf"/>
</dbReference>
<dbReference type="InterPro" id="IPR004627">
    <property type="entry name" value="L-Threonine_3-DHase"/>
</dbReference>
<dbReference type="InterPro" id="IPR036291">
    <property type="entry name" value="NAD(P)-bd_dom_sf"/>
</dbReference>
<dbReference type="InterPro" id="IPR020843">
    <property type="entry name" value="PKS_ER"/>
</dbReference>
<dbReference type="InterPro" id="IPR050129">
    <property type="entry name" value="Zn_alcohol_dh"/>
</dbReference>
<dbReference type="NCBIfam" id="NF003808">
    <property type="entry name" value="PRK05396.1"/>
    <property type="match status" value="1"/>
</dbReference>
<dbReference type="NCBIfam" id="TIGR00692">
    <property type="entry name" value="tdh"/>
    <property type="match status" value="1"/>
</dbReference>
<dbReference type="PANTHER" id="PTHR43401">
    <property type="entry name" value="L-THREONINE 3-DEHYDROGENASE"/>
    <property type="match status" value="1"/>
</dbReference>
<dbReference type="PANTHER" id="PTHR43401:SF2">
    <property type="entry name" value="L-THREONINE 3-DEHYDROGENASE"/>
    <property type="match status" value="1"/>
</dbReference>
<dbReference type="Pfam" id="PF08240">
    <property type="entry name" value="ADH_N"/>
    <property type="match status" value="1"/>
</dbReference>
<dbReference type="Pfam" id="PF00107">
    <property type="entry name" value="ADH_zinc_N"/>
    <property type="match status" value="1"/>
</dbReference>
<dbReference type="SMART" id="SM00829">
    <property type="entry name" value="PKS_ER"/>
    <property type="match status" value="1"/>
</dbReference>
<dbReference type="SUPFAM" id="SSF50129">
    <property type="entry name" value="GroES-like"/>
    <property type="match status" value="1"/>
</dbReference>
<dbReference type="SUPFAM" id="SSF51735">
    <property type="entry name" value="NAD(P)-binding Rossmann-fold domains"/>
    <property type="match status" value="1"/>
</dbReference>
<dbReference type="PROSITE" id="PS00059">
    <property type="entry name" value="ADH_ZINC"/>
    <property type="match status" value="1"/>
</dbReference>